<gene>
    <name evidence="1" type="primary">asnA</name>
    <name type="ordered locus">stu0377</name>
</gene>
<name>ASNA_STRT2</name>
<accession>Q5M5S6</accession>
<organism>
    <name type="scientific">Streptococcus thermophilus (strain ATCC BAA-250 / LMG 18311)</name>
    <dbReference type="NCBI Taxonomy" id="264199"/>
    <lineage>
        <taxon>Bacteria</taxon>
        <taxon>Bacillati</taxon>
        <taxon>Bacillota</taxon>
        <taxon>Bacilli</taxon>
        <taxon>Lactobacillales</taxon>
        <taxon>Streptococcaceae</taxon>
        <taxon>Streptococcus</taxon>
    </lineage>
</organism>
<dbReference type="EC" id="6.3.1.1" evidence="1"/>
<dbReference type="EMBL" id="CP000023">
    <property type="protein sequence ID" value="AAV60096.1"/>
    <property type="molecule type" value="Genomic_DNA"/>
</dbReference>
<dbReference type="RefSeq" id="WP_011225522.1">
    <property type="nucleotide sequence ID" value="NC_006448.1"/>
</dbReference>
<dbReference type="SMR" id="Q5M5S6"/>
<dbReference type="STRING" id="264199.stu0377"/>
<dbReference type="GeneID" id="66898302"/>
<dbReference type="KEGG" id="stl:stu0377"/>
<dbReference type="PATRIC" id="fig|264199.4.peg.384"/>
<dbReference type="eggNOG" id="COG2502">
    <property type="taxonomic scope" value="Bacteria"/>
</dbReference>
<dbReference type="HOGENOM" id="CLU_071543_0_0_9"/>
<dbReference type="UniPathway" id="UPA00134">
    <property type="reaction ID" value="UER00194"/>
</dbReference>
<dbReference type="Proteomes" id="UP000001170">
    <property type="component" value="Chromosome"/>
</dbReference>
<dbReference type="GO" id="GO:0005829">
    <property type="term" value="C:cytosol"/>
    <property type="evidence" value="ECO:0007669"/>
    <property type="project" value="TreeGrafter"/>
</dbReference>
<dbReference type="GO" id="GO:0004071">
    <property type="term" value="F:aspartate-ammonia ligase activity"/>
    <property type="evidence" value="ECO:0007669"/>
    <property type="project" value="UniProtKB-UniRule"/>
</dbReference>
<dbReference type="GO" id="GO:0005524">
    <property type="term" value="F:ATP binding"/>
    <property type="evidence" value="ECO:0007669"/>
    <property type="project" value="UniProtKB-UniRule"/>
</dbReference>
<dbReference type="GO" id="GO:0140096">
    <property type="term" value="F:catalytic activity, acting on a protein"/>
    <property type="evidence" value="ECO:0007669"/>
    <property type="project" value="UniProtKB-ARBA"/>
</dbReference>
<dbReference type="GO" id="GO:0016740">
    <property type="term" value="F:transferase activity"/>
    <property type="evidence" value="ECO:0007669"/>
    <property type="project" value="UniProtKB-ARBA"/>
</dbReference>
<dbReference type="GO" id="GO:0070981">
    <property type="term" value="P:L-asparagine biosynthetic process"/>
    <property type="evidence" value="ECO:0007669"/>
    <property type="project" value="UniProtKB-UniRule"/>
</dbReference>
<dbReference type="CDD" id="cd00645">
    <property type="entry name" value="AsnA"/>
    <property type="match status" value="1"/>
</dbReference>
<dbReference type="Gene3D" id="3.30.930.10">
    <property type="entry name" value="Bira Bifunctional Protein, Domain 2"/>
    <property type="match status" value="1"/>
</dbReference>
<dbReference type="HAMAP" id="MF_00555">
    <property type="entry name" value="AsnA"/>
    <property type="match status" value="1"/>
</dbReference>
<dbReference type="InterPro" id="IPR006195">
    <property type="entry name" value="aa-tRNA-synth_II"/>
</dbReference>
<dbReference type="InterPro" id="IPR045864">
    <property type="entry name" value="aa-tRNA-synth_II/BPL/LPL"/>
</dbReference>
<dbReference type="InterPro" id="IPR004618">
    <property type="entry name" value="AsnA"/>
</dbReference>
<dbReference type="NCBIfam" id="TIGR00669">
    <property type="entry name" value="asnA"/>
    <property type="match status" value="1"/>
</dbReference>
<dbReference type="PANTHER" id="PTHR30073">
    <property type="entry name" value="ASPARTATE--AMMONIA LIGASE"/>
    <property type="match status" value="1"/>
</dbReference>
<dbReference type="PANTHER" id="PTHR30073:SF5">
    <property type="entry name" value="ASPARTATE--AMMONIA LIGASE"/>
    <property type="match status" value="1"/>
</dbReference>
<dbReference type="Pfam" id="PF03590">
    <property type="entry name" value="AsnA"/>
    <property type="match status" value="1"/>
</dbReference>
<dbReference type="PIRSF" id="PIRSF001555">
    <property type="entry name" value="Asp_ammon_ligase"/>
    <property type="match status" value="1"/>
</dbReference>
<dbReference type="SUPFAM" id="SSF55681">
    <property type="entry name" value="Class II aaRS and biotin synthetases"/>
    <property type="match status" value="1"/>
</dbReference>
<dbReference type="PROSITE" id="PS50862">
    <property type="entry name" value="AA_TRNA_LIGASE_II"/>
    <property type="match status" value="1"/>
</dbReference>
<sequence length="330" mass="37486">MKKSFIDQQKEISFVKNTFTQYLIDKLDVVEVQGPILSKVGDGMQDNLNGIENPVTVNVLQIPDATYEVVHSLAKWKRHTLARFGFNEGEGLVVNMKALRPDEDSLDATHSVYVDQWDWEKVIPDGHRNIAYLKETVETIYKVIRLTELAVEARYDIEAVLPKKITFIHSEELVEKYPDLTPKERENAITKEYGAVFLIGIGGVLPDGKPHDGRAPDYDDWTTESEKGYHGLNGDILVWNEQLGHAFELSSMGIRVDEDALKRQVEITGDQDRLKLDWHQALLQGQFPLTIGGGIGQSRMAMFLLRKKHIGEVQTSVWPDAVRETYENIL</sequence>
<keyword id="KW-0028">Amino-acid biosynthesis</keyword>
<keyword id="KW-0061">Asparagine biosynthesis</keyword>
<keyword id="KW-0067">ATP-binding</keyword>
<keyword id="KW-0963">Cytoplasm</keyword>
<keyword id="KW-0436">Ligase</keyword>
<keyword id="KW-0547">Nucleotide-binding</keyword>
<keyword id="KW-1185">Reference proteome</keyword>
<feature type="chain" id="PRO_1000017972" description="Aspartate--ammonia ligase">
    <location>
        <begin position="1"/>
        <end position="330"/>
    </location>
</feature>
<protein>
    <recommendedName>
        <fullName evidence="1">Aspartate--ammonia ligase</fullName>
        <ecNumber evidence="1">6.3.1.1</ecNumber>
    </recommendedName>
    <alternativeName>
        <fullName evidence="1">Asparagine synthetase A</fullName>
    </alternativeName>
</protein>
<reference key="1">
    <citation type="journal article" date="2004" name="Nat. Biotechnol.">
        <title>Complete sequence and comparative genome analysis of the dairy bacterium Streptococcus thermophilus.</title>
        <authorList>
            <person name="Bolotin A."/>
            <person name="Quinquis B."/>
            <person name="Renault P."/>
            <person name="Sorokin A."/>
            <person name="Ehrlich S.D."/>
            <person name="Kulakauskas S."/>
            <person name="Lapidus A."/>
            <person name="Goltsman E."/>
            <person name="Mazur M."/>
            <person name="Pusch G.D."/>
            <person name="Fonstein M."/>
            <person name="Overbeek R."/>
            <person name="Kyprides N."/>
            <person name="Purnelle B."/>
            <person name="Prozzi D."/>
            <person name="Ngui K."/>
            <person name="Masuy D."/>
            <person name="Hancy F."/>
            <person name="Burteau S."/>
            <person name="Boutry M."/>
            <person name="Delcour J."/>
            <person name="Goffeau A."/>
            <person name="Hols P."/>
        </authorList>
    </citation>
    <scope>NUCLEOTIDE SEQUENCE [LARGE SCALE GENOMIC DNA]</scope>
    <source>
        <strain>ATCC BAA-250 / LMG 18311</strain>
    </source>
</reference>
<proteinExistence type="inferred from homology"/>
<evidence type="ECO:0000255" key="1">
    <source>
        <dbReference type="HAMAP-Rule" id="MF_00555"/>
    </source>
</evidence>
<comment type="catalytic activity">
    <reaction evidence="1">
        <text>L-aspartate + NH4(+) + ATP = L-asparagine + AMP + diphosphate + H(+)</text>
        <dbReference type="Rhea" id="RHEA:11372"/>
        <dbReference type="ChEBI" id="CHEBI:15378"/>
        <dbReference type="ChEBI" id="CHEBI:28938"/>
        <dbReference type="ChEBI" id="CHEBI:29991"/>
        <dbReference type="ChEBI" id="CHEBI:30616"/>
        <dbReference type="ChEBI" id="CHEBI:33019"/>
        <dbReference type="ChEBI" id="CHEBI:58048"/>
        <dbReference type="ChEBI" id="CHEBI:456215"/>
        <dbReference type="EC" id="6.3.1.1"/>
    </reaction>
</comment>
<comment type="pathway">
    <text evidence="1">Amino-acid biosynthesis; L-asparagine biosynthesis; L-asparagine from L-aspartate (ammonia route): step 1/1.</text>
</comment>
<comment type="subcellular location">
    <subcellularLocation>
        <location evidence="1">Cytoplasm</location>
    </subcellularLocation>
</comment>
<comment type="similarity">
    <text evidence="1">Belongs to the class-II aminoacyl-tRNA synthetase family. AsnA subfamily.</text>
</comment>